<feature type="chain" id="PRO_0000351026" description="DNA-directed RNA polymerase III subunit rpc3">
    <location>
        <begin position="1"/>
        <end position="653"/>
    </location>
</feature>
<feature type="region of interest" description="Disordered" evidence="2">
    <location>
        <begin position="131"/>
        <end position="181"/>
    </location>
</feature>
<feature type="region of interest" description="Disordered" evidence="2">
    <location>
        <begin position="266"/>
        <end position="285"/>
    </location>
</feature>
<feature type="region of interest" description="Disordered" evidence="2">
    <location>
        <begin position="293"/>
        <end position="312"/>
    </location>
</feature>
<feature type="region of interest" description="Disordered" evidence="2">
    <location>
        <begin position="412"/>
        <end position="444"/>
    </location>
</feature>
<feature type="region of interest" description="Leucine-zipper">
    <location>
        <begin position="580"/>
        <end position="601"/>
    </location>
</feature>
<feature type="compositionally biased region" description="Basic and acidic residues" evidence="2">
    <location>
        <begin position="138"/>
        <end position="169"/>
    </location>
</feature>
<feature type="compositionally biased region" description="Acidic residues" evidence="2">
    <location>
        <begin position="293"/>
        <end position="311"/>
    </location>
</feature>
<dbReference type="EMBL" id="BA000052">
    <property type="protein sequence ID" value="BAE61638.1"/>
    <property type="molecule type" value="Genomic_DNA"/>
</dbReference>
<dbReference type="RefSeq" id="XP_001822771.1">
    <property type="nucleotide sequence ID" value="XM_001822719.1"/>
</dbReference>
<dbReference type="SMR" id="Q2U9X7"/>
<dbReference type="STRING" id="510516.Q2U9X7"/>
<dbReference type="EnsemblFungi" id="BAE61638">
    <property type="protein sequence ID" value="BAE61638"/>
    <property type="gene ID" value="AO090102000624"/>
</dbReference>
<dbReference type="GeneID" id="5994816"/>
<dbReference type="KEGG" id="aor:AO090102000624"/>
<dbReference type="VEuPathDB" id="FungiDB:AO090102000624"/>
<dbReference type="HOGENOM" id="CLU_023294_0_0_1"/>
<dbReference type="OMA" id="KHRFVRH"/>
<dbReference type="OrthoDB" id="93225at5052"/>
<dbReference type="Proteomes" id="UP000006564">
    <property type="component" value="Chromosome 4"/>
</dbReference>
<dbReference type="GO" id="GO:0005666">
    <property type="term" value="C:RNA polymerase III complex"/>
    <property type="evidence" value="ECO:0007669"/>
    <property type="project" value="InterPro"/>
</dbReference>
<dbReference type="GO" id="GO:0003697">
    <property type="term" value="F:single-stranded DNA binding"/>
    <property type="evidence" value="ECO:0007669"/>
    <property type="project" value="InterPro"/>
</dbReference>
<dbReference type="GO" id="GO:0006351">
    <property type="term" value="P:DNA-templated transcription"/>
    <property type="evidence" value="ECO:0007669"/>
    <property type="project" value="InterPro"/>
</dbReference>
<dbReference type="Gene3D" id="1.10.10.10">
    <property type="entry name" value="Winged helix-like DNA-binding domain superfamily/Winged helix DNA-binding domain"/>
    <property type="match status" value="2"/>
</dbReference>
<dbReference type="InterPro" id="IPR055207">
    <property type="entry name" value="POLR3C_WHD"/>
</dbReference>
<dbReference type="InterPro" id="IPR013197">
    <property type="entry name" value="RNA_pol_III_RPC82-rel_HTH"/>
</dbReference>
<dbReference type="InterPro" id="IPR008806">
    <property type="entry name" value="RNA_pol_III_Rpc82_C"/>
</dbReference>
<dbReference type="InterPro" id="IPR039748">
    <property type="entry name" value="RPC3"/>
</dbReference>
<dbReference type="InterPro" id="IPR036388">
    <property type="entry name" value="WH-like_DNA-bd_sf"/>
</dbReference>
<dbReference type="PANTHER" id="PTHR12949:SF0">
    <property type="entry name" value="DNA-DIRECTED RNA POLYMERASE III SUBUNIT RPC3"/>
    <property type="match status" value="1"/>
</dbReference>
<dbReference type="PANTHER" id="PTHR12949">
    <property type="entry name" value="RNA POLYMERASE III DNA DIRECTED -RELATED"/>
    <property type="match status" value="1"/>
</dbReference>
<dbReference type="Pfam" id="PF08221">
    <property type="entry name" value="HTH_9"/>
    <property type="match status" value="1"/>
</dbReference>
<dbReference type="Pfam" id="PF22536">
    <property type="entry name" value="POLR3C_WHD"/>
    <property type="match status" value="1"/>
</dbReference>
<dbReference type="Pfam" id="PF05645">
    <property type="entry name" value="RNA_pol_Rpc82"/>
    <property type="match status" value="1"/>
</dbReference>
<organism>
    <name type="scientific">Aspergillus oryzae (strain ATCC 42149 / RIB 40)</name>
    <name type="common">Yellow koji mold</name>
    <dbReference type="NCBI Taxonomy" id="510516"/>
    <lineage>
        <taxon>Eukaryota</taxon>
        <taxon>Fungi</taxon>
        <taxon>Dikarya</taxon>
        <taxon>Ascomycota</taxon>
        <taxon>Pezizomycotina</taxon>
        <taxon>Eurotiomycetes</taxon>
        <taxon>Eurotiomycetidae</taxon>
        <taxon>Eurotiales</taxon>
        <taxon>Aspergillaceae</taxon>
        <taxon>Aspergillus</taxon>
        <taxon>Aspergillus subgen. Circumdati</taxon>
    </lineage>
</organism>
<evidence type="ECO:0000250" key="1"/>
<evidence type="ECO:0000256" key="2">
    <source>
        <dbReference type="SAM" id="MobiDB-lite"/>
    </source>
</evidence>
<evidence type="ECO:0000305" key="3"/>
<sequence>MTSQYAGELCTLLVEDNFGELFARIFSTLNRYDRLSFSRLKFYSRLSNAQLRHGLAAMIQQHLVYHYTSYDDGITYYEPNMQSAYYLVRSGKILELIEHRLGKYAATVMSTIMFLGHAQVGYLETLPALRPSNSDVNRASEERGGIHETEEYHGEEARQETEEHRETEGRPNGLNSDYTSSERPALLHPTLKALAGHGYILRVRDAQFQSYADNALDAERTIKSRPDIKALKGKKLDEAVTEGTLELLKERLDGDLTRGLMFNGVPRGAKRRHTTGATEASNKKARVDYAAVDEDEDGGEENEWSDDDFGEDTIPMESGITVRINYEKLDVALRNRRFLELAERDSSPVTAEVYESLLRRIEYQTAKCRDTTEIPREGEEGEHYSVPVPLRAVVEDVDLFLDLAGSVGPMEVSQPINRRGKRPLEETTNGAAHDGTNGGQSDGNRTYEVDQHLCLLAQPPYSLTSKRMVSGLITWTVEFRHLARKLRHLELERIIEARYGDVALRVVRVLHDKGKLDEKRLQEISLLPFKDLRQVLASMQTGGFVDLQEVPRDALRQPSKTIFLWFYDPDRVGNSVLEDTYKAMSRCLQRLRFERSRLKEFLEKTERSDVKGNEERYLSEAELTLLGQWRAKEALLLGEVARLDEMVAVIRDY</sequence>
<keyword id="KW-0240">DNA-directed RNA polymerase</keyword>
<keyword id="KW-0539">Nucleus</keyword>
<keyword id="KW-1185">Reference proteome</keyword>
<keyword id="KW-0804">Transcription</keyword>
<keyword id="KW-0862">Zinc</keyword>
<gene>
    <name type="primary">rpc82</name>
    <name type="synonym">rpc3</name>
    <name type="ORF">AO090102000624</name>
</gene>
<proteinExistence type="inferred from homology"/>
<comment type="function">
    <text evidence="1">DNA-dependent RNA polymerase catalyzes the transcription of DNA into RNA using the four ribonucleoside triphosphates as substrates. Specific core component of RNA polymerase III which synthesizes small RNAs, such as 5S rRNA and tRNAs (By similarity).</text>
</comment>
<comment type="subunit">
    <text evidence="1">Component of the RNA polymerase III (Pol III) complex consisting of 17 subunits.</text>
</comment>
<comment type="subcellular location">
    <subcellularLocation>
        <location evidence="1">Nucleus</location>
    </subcellularLocation>
</comment>
<comment type="similarity">
    <text evidence="3">Belongs to the RNA polymerase beta chain family.</text>
</comment>
<reference key="1">
    <citation type="journal article" date="2005" name="Nature">
        <title>Genome sequencing and analysis of Aspergillus oryzae.</title>
        <authorList>
            <person name="Machida M."/>
            <person name="Asai K."/>
            <person name="Sano M."/>
            <person name="Tanaka T."/>
            <person name="Kumagai T."/>
            <person name="Terai G."/>
            <person name="Kusumoto K."/>
            <person name="Arima T."/>
            <person name="Akita O."/>
            <person name="Kashiwagi Y."/>
            <person name="Abe K."/>
            <person name="Gomi K."/>
            <person name="Horiuchi H."/>
            <person name="Kitamoto K."/>
            <person name="Kobayashi T."/>
            <person name="Takeuchi M."/>
            <person name="Denning D.W."/>
            <person name="Galagan J.E."/>
            <person name="Nierman W.C."/>
            <person name="Yu J."/>
            <person name="Archer D.B."/>
            <person name="Bennett J.W."/>
            <person name="Bhatnagar D."/>
            <person name="Cleveland T.E."/>
            <person name="Fedorova N.D."/>
            <person name="Gotoh O."/>
            <person name="Horikawa H."/>
            <person name="Hosoyama A."/>
            <person name="Ichinomiya M."/>
            <person name="Igarashi R."/>
            <person name="Iwashita K."/>
            <person name="Juvvadi P.R."/>
            <person name="Kato M."/>
            <person name="Kato Y."/>
            <person name="Kin T."/>
            <person name="Kokubun A."/>
            <person name="Maeda H."/>
            <person name="Maeyama N."/>
            <person name="Maruyama J."/>
            <person name="Nagasaki H."/>
            <person name="Nakajima T."/>
            <person name="Oda K."/>
            <person name="Okada K."/>
            <person name="Paulsen I."/>
            <person name="Sakamoto K."/>
            <person name="Sawano T."/>
            <person name="Takahashi M."/>
            <person name="Takase K."/>
            <person name="Terabayashi Y."/>
            <person name="Wortman J.R."/>
            <person name="Yamada O."/>
            <person name="Yamagata Y."/>
            <person name="Anazawa H."/>
            <person name="Hata Y."/>
            <person name="Koide Y."/>
            <person name="Komori T."/>
            <person name="Koyama Y."/>
            <person name="Minetoki T."/>
            <person name="Suharnan S."/>
            <person name="Tanaka A."/>
            <person name="Isono K."/>
            <person name="Kuhara S."/>
            <person name="Ogasawara N."/>
            <person name="Kikuchi H."/>
        </authorList>
    </citation>
    <scope>NUCLEOTIDE SEQUENCE [LARGE SCALE GENOMIC DNA]</scope>
    <source>
        <strain>ATCC 42149 / RIB 40</strain>
    </source>
</reference>
<accession>Q2U9X7</accession>
<protein>
    <recommendedName>
        <fullName>DNA-directed RNA polymerase III subunit rpc3</fullName>
        <shortName>RNA polymerase III subunit C3</shortName>
    </recommendedName>
</protein>
<name>RPC3_ASPOR</name>